<sequence length="287" mass="31336">MKRVMLFLATNLAVVLVLSVVLNIVYAVTGMQPGSLSGLLVMAAVFGFGGSFISLMMSKKMALRSVGGMVIESPRNETEHWLMETVSRQSQQVGIGMPTVAIYDSPDINAFATGAKRNDSLVAVSTGLLHNMTRDEAEAVLAHEVSHIANGDMVTMTLMQGVVNTFVIFLSRFIANIVASNDNEEEGGSNMMVYFGVSMVLELVFGFLASFITMWYSRHREFHADADAAHLVGKEKMIAALERLKVSHEPQLEGSMMAFGINGKKSLTELLMSHPPLDKRIASLRNM</sequence>
<keyword id="KW-0997">Cell inner membrane</keyword>
<keyword id="KW-1003">Cell membrane</keyword>
<keyword id="KW-0378">Hydrolase</keyword>
<keyword id="KW-0472">Membrane</keyword>
<keyword id="KW-0479">Metal-binding</keyword>
<keyword id="KW-0482">Metalloprotease</keyword>
<keyword id="KW-0645">Protease</keyword>
<keyword id="KW-0812">Transmembrane</keyword>
<keyword id="KW-1133">Transmembrane helix</keyword>
<keyword id="KW-0862">Zinc</keyword>
<organism>
    <name type="scientific">Vibrio atlanticus (strain LGP32)</name>
    <name type="common">Vibrio splendidus (strain Mel32)</name>
    <dbReference type="NCBI Taxonomy" id="575788"/>
    <lineage>
        <taxon>Bacteria</taxon>
        <taxon>Pseudomonadati</taxon>
        <taxon>Pseudomonadota</taxon>
        <taxon>Gammaproteobacteria</taxon>
        <taxon>Vibrionales</taxon>
        <taxon>Vibrionaceae</taxon>
        <taxon>Vibrio</taxon>
    </lineage>
</organism>
<gene>
    <name evidence="1" type="primary">htpX</name>
    <name type="ordered locus">VS_2035</name>
</gene>
<reference key="1">
    <citation type="submission" date="2009-02" db="EMBL/GenBank/DDBJ databases">
        <title>Vibrio splendidus str. LGP32 complete genome.</title>
        <authorList>
            <person name="Mazel D."/>
            <person name="Le Roux F."/>
        </authorList>
    </citation>
    <scope>NUCLEOTIDE SEQUENCE [LARGE SCALE GENOMIC DNA]</scope>
    <source>
        <strain>LGP32</strain>
    </source>
</reference>
<accession>B7VH11</accession>
<proteinExistence type="inferred from homology"/>
<feature type="chain" id="PRO_1000192755" description="Protease HtpX">
    <location>
        <begin position="1"/>
        <end position="287"/>
    </location>
</feature>
<feature type="transmembrane region" description="Helical" evidence="1">
    <location>
        <begin position="4"/>
        <end position="24"/>
    </location>
</feature>
<feature type="transmembrane region" description="Helical" evidence="1">
    <location>
        <begin position="36"/>
        <end position="56"/>
    </location>
</feature>
<feature type="transmembrane region" description="Helical" evidence="1">
    <location>
        <begin position="158"/>
        <end position="178"/>
    </location>
</feature>
<feature type="transmembrane region" description="Helical" evidence="1">
    <location>
        <begin position="192"/>
        <end position="212"/>
    </location>
</feature>
<feature type="active site" evidence="1">
    <location>
        <position position="144"/>
    </location>
</feature>
<feature type="binding site" evidence="1">
    <location>
        <position position="143"/>
    </location>
    <ligand>
        <name>Zn(2+)</name>
        <dbReference type="ChEBI" id="CHEBI:29105"/>
        <note>catalytic</note>
    </ligand>
</feature>
<feature type="binding site" evidence="1">
    <location>
        <position position="147"/>
    </location>
    <ligand>
        <name>Zn(2+)</name>
        <dbReference type="ChEBI" id="CHEBI:29105"/>
        <note>catalytic</note>
    </ligand>
</feature>
<feature type="binding site" evidence="1">
    <location>
        <position position="221"/>
    </location>
    <ligand>
        <name>Zn(2+)</name>
        <dbReference type="ChEBI" id="CHEBI:29105"/>
        <note>catalytic</note>
    </ligand>
</feature>
<evidence type="ECO:0000255" key="1">
    <source>
        <dbReference type="HAMAP-Rule" id="MF_00188"/>
    </source>
</evidence>
<protein>
    <recommendedName>
        <fullName evidence="1">Protease HtpX</fullName>
        <ecNumber evidence="1">3.4.24.-</ecNumber>
    </recommendedName>
    <alternativeName>
        <fullName evidence="1">Heat shock protein HtpX</fullName>
    </alternativeName>
</protein>
<dbReference type="EC" id="3.4.24.-" evidence="1"/>
<dbReference type="EMBL" id="FM954972">
    <property type="protein sequence ID" value="CAV19211.1"/>
    <property type="molecule type" value="Genomic_DNA"/>
</dbReference>
<dbReference type="SMR" id="B7VH11"/>
<dbReference type="STRING" id="575788.VS_2035"/>
<dbReference type="MEROPS" id="M48.002"/>
<dbReference type="KEGG" id="vsp:VS_2035"/>
<dbReference type="PATRIC" id="fig|575788.5.peg.3313"/>
<dbReference type="eggNOG" id="COG0501">
    <property type="taxonomic scope" value="Bacteria"/>
</dbReference>
<dbReference type="HOGENOM" id="CLU_042266_1_0_6"/>
<dbReference type="Proteomes" id="UP000009100">
    <property type="component" value="Chromosome 1"/>
</dbReference>
<dbReference type="GO" id="GO:0005886">
    <property type="term" value="C:plasma membrane"/>
    <property type="evidence" value="ECO:0007669"/>
    <property type="project" value="UniProtKB-SubCell"/>
</dbReference>
<dbReference type="GO" id="GO:0004222">
    <property type="term" value="F:metalloendopeptidase activity"/>
    <property type="evidence" value="ECO:0007669"/>
    <property type="project" value="UniProtKB-UniRule"/>
</dbReference>
<dbReference type="GO" id="GO:0008270">
    <property type="term" value="F:zinc ion binding"/>
    <property type="evidence" value="ECO:0007669"/>
    <property type="project" value="UniProtKB-UniRule"/>
</dbReference>
<dbReference type="GO" id="GO:0006508">
    <property type="term" value="P:proteolysis"/>
    <property type="evidence" value="ECO:0007669"/>
    <property type="project" value="UniProtKB-KW"/>
</dbReference>
<dbReference type="CDD" id="cd07335">
    <property type="entry name" value="M48B_HtpX_like"/>
    <property type="match status" value="1"/>
</dbReference>
<dbReference type="FunFam" id="3.30.2010.10:FF:000001">
    <property type="entry name" value="Protease HtpX"/>
    <property type="match status" value="1"/>
</dbReference>
<dbReference type="Gene3D" id="3.30.2010.10">
    <property type="entry name" value="Metalloproteases ('zincins'), catalytic domain"/>
    <property type="match status" value="1"/>
</dbReference>
<dbReference type="HAMAP" id="MF_00188">
    <property type="entry name" value="Pept_M48_protease_HtpX"/>
    <property type="match status" value="1"/>
</dbReference>
<dbReference type="InterPro" id="IPR050083">
    <property type="entry name" value="HtpX_protease"/>
</dbReference>
<dbReference type="InterPro" id="IPR022919">
    <property type="entry name" value="Pept_M48_protease_HtpX"/>
</dbReference>
<dbReference type="InterPro" id="IPR001915">
    <property type="entry name" value="Peptidase_M48"/>
</dbReference>
<dbReference type="NCBIfam" id="NF003965">
    <property type="entry name" value="PRK05457.1"/>
    <property type="match status" value="1"/>
</dbReference>
<dbReference type="PANTHER" id="PTHR43221">
    <property type="entry name" value="PROTEASE HTPX"/>
    <property type="match status" value="1"/>
</dbReference>
<dbReference type="PANTHER" id="PTHR43221:SF1">
    <property type="entry name" value="PROTEASE HTPX"/>
    <property type="match status" value="1"/>
</dbReference>
<dbReference type="Pfam" id="PF01435">
    <property type="entry name" value="Peptidase_M48"/>
    <property type="match status" value="1"/>
</dbReference>
<comment type="cofactor">
    <cofactor evidence="1">
        <name>Zn(2+)</name>
        <dbReference type="ChEBI" id="CHEBI:29105"/>
    </cofactor>
    <text evidence="1">Binds 1 zinc ion per subunit.</text>
</comment>
<comment type="subcellular location">
    <subcellularLocation>
        <location evidence="1">Cell inner membrane</location>
        <topology evidence="1">Multi-pass membrane protein</topology>
    </subcellularLocation>
</comment>
<comment type="similarity">
    <text evidence="1">Belongs to the peptidase M48B family.</text>
</comment>
<name>HTPX_VIBA3</name>